<gene>
    <name evidence="1" type="primary">thrS</name>
    <name type="ordered locus">ECED1_1920</name>
</gene>
<keyword id="KW-0007">Acetylation</keyword>
<keyword id="KW-0030">Aminoacyl-tRNA synthetase</keyword>
<keyword id="KW-0067">ATP-binding</keyword>
<keyword id="KW-0963">Cytoplasm</keyword>
<keyword id="KW-0436">Ligase</keyword>
<keyword id="KW-0479">Metal-binding</keyword>
<keyword id="KW-0547">Nucleotide-binding</keyword>
<keyword id="KW-0648">Protein biosynthesis</keyword>
<keyword id="KW-0694">RNA-binding</keyword>
<keyword id="KW-0820">tRNA-binding</keyword>
<keyword id="KW-0862">Zinc</keyword>
<protein>
    <recommendedName>
        <fullName evidence="1">Threonine--tRNA ligase</fullName>
        <ecNumber evidence="1">6.1.1.3</ecNumber>
    </recommendedName>
    <alternativeName>
        <fullName evidence="1">Threonyl-tRNA synthetase</fullName>
        <shortName evidence="1">ThrRS</shortName>
    </alternativeName>
</protein>
<comment type="function">
    <text evidence="1">Catalyzes the attachment of threonine to tRNA(Thr) in a two-step reaction: L-threonine is first activated by ATP to form Thr-AMP and then transferred to the acceptor end of tRNA(Thr). Also edits incorrectly charged L-seryl-tRNA(Thr).</text>
</comment>
<comment type="catalytic activity">
    <reaction evidence="1">
        <text>tRNA(Thr) + L-threonine + ATP = L-threonyl-tRNA(Thr) + AMP + diphosphate + H(+)</text>
        <dbReference type="Rhea" id="RHEA:24624"/>
        <dbReference type="Rhea" id="RHEA-COMP:9670"/>
        <dbReference type="Rhea" id="RHEA-COMP:9704"/>
        <dbReference type="ChEBI" id="CHEBI:15378"/>
        <dbReference type="ChEBI" id="CHEBI:30616"/>
        <dbReference type="ChEBI" id="CHEBI:33019"/>
        <dbReference type="ChEBI" id="CHEBI:57926"/>
        <dbReference type="ChEBI" id="CHEBI:78442"/>
        <dbReference type="ChEBI" id="CHEBI:78534"/>
        <dbReference type="ChEBI" id="CHEBI:456215"/>
        <dbReference type="EC" id="6.1.1.3"/>
    </reaction>
</comment>
<comment type="cofactor">
    <cofactor evidence="1">
        <name>Zn(2+)</name>
        <dbReference type="ChEBI" id="CHEBI:29105"/>
    </cofactor>
    <text evidence="1">Binds 1 zinc ion per subunit.</text>
</comment>
<comment type="subunit">
    <text evidence="1">Homodimer.</text>
</comment>
<comment type="subcellular location">
    <subcellularLocation>
        <location evidence="1">Cytoplasm</location>
    </subcellularLocation>
</comment>
<comment type="similarity">
    <text evidence="1">Belongs to the class-II aminoacyl-tRNA synthetase family.</text>
</comment>
<proteinExistence type="inferred from homology"/>
<sequence>MPVITLPDGSQRHYDHAVSPMDVALDIGPGLAKACIAGRVNGELVDACDLIENDAQLSIITAKDEEGLEIIRHSCAHLLGHAIKQLWPHTKMAIGPVIDNGFYYDVDLDRTLTQEDVEALEKRMHELAEKNYDVIKKKVSWHEARETFANRGESYKVSILDENIAHDDKPGLYFHEEYVDMCRGPHVPNMRFCHHFKLMKTAGAYWRGDSNNKMLQRIYGTAWADKKALNAYLQRLEEAAKRDHRKIGKQLDLYHMQEEAPGMVFWHNDGWTIFRELEVFVRSKLKEYQYQEVKGPFMMDRVLWEKTGHWDNYKDAMFTTSSENREYCIKPMNCPGHVQIFNQGLKSYRDLPLRMAEFGSCHRNEPSGSLHGLMRVRGFTQDDAHIFCTEEQIRDEVNGCIRLVYDMYSTFGFEKIVVKLSTRPEKRIGSDEMWDRAEADLAVALEENNIPFEYQLGEGAFYGPKIEFTLYDCLDRAWQCGTVQLDFSLPSRLSASYVGEDNERKVPVMIHRAILGSMERFIGILTEEFAGFFPTWLAPVQVVIMNITDSQSEYVNELTQKLSNAGIRVKADLRNEKIGFKIREHTLRRVPYMLVCGDKEVESGKVAVRTRRGKDLGSMDVNEVIEKLQQEIRSRSLKQLEE</sequence>
<organism>
    <name type="scientific">Escherichia coli O81 (strain ED1a)</name>
    <dbReference type="NCBI Taxonomy" id="585397"/>
    <lineage>
        <taxon>Bacteria</taxon>
        <taxon>Pseudomonadati</taxon>
        <taxon>Pseudomonadota</taxon>
        <taxon>Gammaproteobacteria</taxon>
        <taxon>Enterobacterales</taxon>
        <taxon>Enterobacteriaceae</taxon>
        <taxon>Escherichia</taxon>
    </lineage>
</organism>
<feature type="chain" id="PRO_1000199551" description="Threonine--tRNA ligase">
    <location>
        <begin position="1"/>
        <end position="642"/>
    </location>
</feature>
<feature type="domain" description="TGS" evidence="2">
    <location>
        <begin position="1"/>
        <end position="61"/>
    </location>
</feature>
<feature type="region of interest" description="Catalytic" evidence="1">
    <location>
        <begin position="243"/>
        <end position="534"/>
    </location>
</feature>
<feature type="binding site" evidence="1">
    <location>
        <position position="334"/>
    </location>
    <ligand>
        <name>Zn(2+)</name>
        <dbReference type="ChEBI" id="CHEBI:29105"/>
    </ligand>
</feature>
<feature type="binding site" evidence="1">
    <location>
        <position position="385"/>
    </location>
    <ligand>
        <name>Zn(2+)</name>
        <dbReference type="ChEBI" id="CHEBI:29105"/>
    </ligand>
</feature>
<feature type="binding site" evidence="1">
    <location>
        <position position="511"/>
    </location>
    <ligand>
        <name>Zn(2+)</name>
        <dbReference type="ChEBI" id="CHEBI:29105"/>
    </ligand>
</feature>
<feature type="modified residue" description="N6-acetyllysine" evidence="1">
    <location>
        <position position="286"/>
    </location>
</feature>
<name>SYT_ECO81</name>
<accession>B7MVJ7</accession>
<reference key="1">
    <citation type="journal article" date="2009" name="PLoS Genet.">
        <title>Organised genome dynamics in the Escherichia coli species results in highly diverse adaptive paths.</title>
        <authorList>
            <person name="Touchon M."/>
            <person name="Hoede C."/>
            <person name="Tenaillon O."/>
            <person name="Barbe V."/>
            <person name="Baeriswyl S."/>
            <person name="Bidet P."/>
            <person name="Bingen E."/>
            <person name="Bonacorsi S."/>
            <person name="Bouchier C."/>
            <person name="Bouvet O."/>
            <person name="Calteau A."/>
            <person name="Chiapello H."/>
            <person name="Clermont O."/>
            <person name="Cruveiller S."/>
            <person name="Danchin A."/>
            <person name="Diard M."/>
            <person name="Dossat C."/>
            <person name="Karoui M.E."/>
            <person name="Frapy E."/>
            <person name="Garry L."/>
            <person name="Ghigo J.M."/>
            <person name="Gilles A.M."/>
            <person name="Johnson J."/>
            <person name="Le Bouguenec C."/>
            <person name="Lescat M."/>
            <person name="Mangenot S."/>
            <person name="Martinez-Jehanne V."/>
            <person name="Matic I."/>
            <person name="Nassif X."/>
            <person name="Oztas S."/>
            <person name="Petit M.A."/>
            <person name="Pichon C."/>
            <person name="Rouy Z."/>
            <person name="Ruf C.S."/>
            <person name="Schneider D."/>
            <person name="Tourret J."/>
            <person name="Vacherie B."/>
            <person name="Vallenet D."/>
            <person name="Medigue C."/>
            <person name="Rocha E.P.C."/>
            <person name="Denamur E."/>
        </authorList>
    </citation>
    <scope>NUCLEOTIDE SEQUENCE [LARGE SCALE GENOMIC DNA]</scope>
    <source>
        <strain>ED1a</strain>
    </source>
</reference>
<evidence type="ECO:0000255" key="1">
    <source>
        <dbReference type="HAMAP-Rule" id="MF_00184"/>
    </source>
</evidence>
<evidence type="ECO:0000255" key="2">
    <source>
        <dbReference type="PROSITE-ProRule" id="PRU01228"/>
    </source>
</evidence>
<dbReference type="EC" id="6.1.1.3" evidence="1"/>
<dbReference type="EMBL" id="CU928162">
    <property type="protein sequence ID" value="CAR08113.2"/>
    <property type="molecule type" value="Genomic_DNA"/>
</dbReference>
<dbReference type="RefSeq" id="WP_001144202.1">
    <property type="nucleotide sequence ID" value="NC_011745.1"/>
</dbReference>
<dbReference type="SMR" id="B7MVJ7"/>
<dbReference type="GeneID" id="93775932"/>
<dbReference type="KEGG" id="ecq:ECED1_1920"/>
<dbReference type="HOGENOM" id="CLU_008554_0_1_6"/>
<dbReference type="Proteomes" id="UP000000748">
    <property type="component" value="Chromosome"/>
</dbReference>
<dbReference type="GO" id="GO:0005829">
    <property type="term" value="C:cytosol"/>
    <property type="evidence" value="ECO:0007669"/>
    <property type="project" value="TreeGrafter"/>
</dbReference>
<dbReference type="GO" id="GO:0005524">
    <property type="term" value="F:ATP binding"/>
    <property type="evidence" value="ECO:0007669"/>
    <property type="project" value="UniProtKB-UniRule"/>
</dbReference>
<dbReference type="GO" id="GO:0046872">
    <property type="term" value="F:metal ion binding"/>
    <property type="evidence" value="ECO:0007669"/>
    <property type="project" value="UniProtKB-KW"/>
</dbReference>
<dbReference type="GO" id="GO:0004829">
    <property type="term" value="F:threonine-tRNA ligase activity"/>
    <property type="evidence" value="ECO:0007669"/>
    <property type="project" value="UniProtKB-UniRule"/>
</dbReference>
<dbReference type="GO" id="GO:0000049">
    <property type="term" value="F:tRNA binding"/>
    <property type="evidence" value="ECO:0007669"/>
    <property type="project" value="UniProtKB-KW"/>
</dbReference>
<dbReference type="GO" id="GO:0006435">
    <property type="term" value="P:threonyl-tRNA aminoacylation"/>
    <property type="evidence" value="ECO:0007669"/>
    <property type="project" value="UniProtKB-UniRule"/>
</dbReference>
<dbReference type="CDD" id="cd01667">
    <property type="entry name" value="TGS_ThrRS"/>
    <property type="match status" value="1"/>
</dbReference>
<dbReference type="CDD" id="cd00860">
    <property type="entry name" value="ThrRS_anticodon"/>
    <property type="match status" value="1"/>
</dbReference>
<dbReference type="CDD" id="cd00771">
    <property type="entry name" value="ThrRS_core"/>
    <property type="match status" value="1"/>
</dbReference>
<dbReference type="FunFam" id="3.10.20.30:FF:000005">
    <property type="entry name" value="Threonine--tRNA ligase"/>
    <property type="match status" value="1"/>
</dbReference>
<dbReference type="FunFam" id="3.30.54.20:FF:000002">
    <property type="entry name" value="Threonine--tRNA ligase"/>
    <property type="match status" value="1"/>
</dbReference>
<dbReference type="FunFam" id="3.30.930.10:FF:000002">
    <property type="entry name" value="Threonine--tRNA ligase"/>
    <property type="match status" value="1"/>
</dbReference>
<dbReference type="FunFam" id="3.40.50.800:FF:000001">
    <property type="entry name" value="Threonine--tRNA ligase"/>
    <property type="match status" value="1"/>
</dbReference>
<dbReference type="FunFam" id="3.30.980.10:FF:000005">
    <property type="entry name" value="Threonyl-tRNA synthetase, mitochondrial"/>
    <property type="match status" value="1"/>
</dbReference>
<dbReference type="Gene3D" id="3.10.20.30">
    <property type="match status" value="1"/>
</dbReference>
<dbReference type="Gene3D" id="3.30.54.20">
    <property type="match status" value="1"/>
</dbReference>
<dbReference type="Gene3D" id="3.40.50.800">
    <property type="entry name" value="Anticodon-binding domain"/>
    <property type="match status" value="1"/>
</dbReference>
<dbReference type="Gene3D" id="3.30.930.10">
    <property type="entry name" value="Bira Bifunctional Protein, Domain 2"/>
    <property type="match status" value="1"/>
</dbReference>
<dbReference type="Gene3D" id="3.30.980.10">
    <property type="entry name" value="Threonyl-trna Synthetase, Chain A, domain 2"/>
    <property type="match status" value="1"/>
</dbReference>
<dbReference type="HAMAP" id="MF_00184">
    <property type="entry name" value="Thr_tRNA_synth"/>
    <property type="match status" value="1"/>
</dbReference>
<dbReference type="InterPro" id="IPR002314">
    <property type="entry name" value="aa-tRNA-synt_IIb"/>
</dbReference>
<dbReference type="InterPro" id="IPR006195">
    <property type="entry name" value="aa-tRNA-synth_II"/>
</dbReference>
<dbReference type="InterPro" id="IPR045864">
    <property type="entry name" value="aa-tRNA-synth_II/BPL/LPL"/>
</dbReference>
<dbReference type="InterPro" id="IPR004154">
    <property type="entry name" value="Anticodon-bd"/>
</dbReference>
<dbReference type="InterPro" id="IPR036621">
    <property type="entry name" value="Anticodon-bd_dom_sf"/>
</dbReference>
<dbReference type="InterPro" id="IPR012675">
    <property type="entry name" value="Beta-grasp_dom_sf"/>
</dbReference>
<dbReference type="InterPro" id="IPR004095">
    <property type="entry name" value="TGS"/>
</dbReference>
<dbReference type="InterPro" id="IPR012676">
    <property type="entry name" value="TGS-like"/>
</dbReference>
<dbReference type="InterPro" id="IPR002320">
    <property type="entry name" value="Thr-tRNA-ligase_IIa"/>
</dbReference>
<dbReference type="InterPro" id="IPR018163">
    <property type="entry name" value="Thr/Ala-tRNA-synth_IIc_edit"/>
</dbReference>
<dbReference type="InterPro" id="IPR047246">
    <property type="entry name" value="ThrRS_anticodon"/>
</dbReference>
<dbReference type="InterPro" id="IPR033728">
    <property type="entry name" value="ThrRS_core"/>
</dbReference>
<dbReference type="InterPro" id="IPR012947">
    <property type="entry name" value="tRNA_SAD"/>
</dbReference>
<dbReference type="NCBIfam" id="TIGR00418">
    <property type="entry name" value="thrS"/>
    <property type="match status" value="1"/>
</dbReference>
<dbReference type="PANTHER" id="PTHR11451:SF44">
    <property type="entry name" value="THREONINE--TRNA LIGASE, CHLOROPLASTIC_MITOCHONDRIAL 2"/>
    <property type="match status" value="1"/>
</dbReference>
<dbReference type="PANTHER" id="PTHR11451">
    <property type="entry name" value="THREONINE-TRNA LIGASE"/>
    <property type="match status" value="1"/>
</dbReference>
<dbReference type="Pfam" id="PF03129">
    <property type="entry name" value="HGTP_anticodon"/>
    <property type="match status" value="1"/>
</dbReference>
<dbReference type="Pfam" id="PF02824">
    <property type="entry name" value="TGS"/>
    <property type="match status" value="1"/>
</dbReference>
<dbReference type="Pfam" id="PF00587">
    <property type="entry name" value="tRNA-synt_2b"/>
    <property type="match status" value="1"/>
</dbReference>
<dbReference type="Pfam" id="PF07973">
    <property type="entry name" value="tRNA_SAD"/>
    <property type="match status" value="1"/>
</dbReference>
<dbReference type="PRINTS" id="PR01047">
    <property type="entry name" value="TRNASYNTHTHR"/>
</dbReference>
<dbReference type="SMART" id="SM00863">
    <property type="entry name" value="tRNA_SAD"/>
    <property type="match status" value="1"/>
</dbReference>
<dbReference type="SUPFAM" id="SSF52954">
    <property type="entry name" value="Class II aaRS ABD-related"/>
    <property type="match status" value="1"/>
</dbReference>
<dbReference type="SUPFAM" id="SSF55681">
    <property type="entry name" value="Class II aaRS and biotin synthetases"/>
    <property type="match status" value="1"/>
</dbReference>
<dbReference type="SUPFAM" id="SSF81271">
    <property type="entry name" value="TGS-like"/>
    <property type="match status" value="1"/>
</dbReference>
<dbReference type="SUPFAM" id="SSF55186">
    <property type="entry name" value="ThrRS/AlaRS common domain"/>
    <property type="match status" value="1"/>
</dbReference>
<dbReference type="PROSITE" id="PS50862">
    <property type="entry name" value="AA_TRNA_LIGASE_II"/>
    <property type="match status" value="1"/>
</dbReference>
<dbReference type="PROSITE" id="PS51880">
    <property type="entry name" value="TGS"/>
    <property type="match status" value="1"/>
</dbReference>